<organism>
    <name type="scientific">Streptococcus gordonii (strain Challis / ATCC 35105 / BCRC 15272 / CH1 / DL1 / V288)</name>
    <dbReference type="NCBI Taxonomy" id="467705"/>
    <lineage>
        <taxon>Bacteria</taxon>
        <taxon>Bacillati</taxon>
        <taxon>Bacillota</taxon>
        <taxon>Bacilli</taxon>
        <taxon>Lactobacillales</taxon>
        <taxon>Streptococcaceae</taxon>
        <taxon>Streptococcus</taxon>
    </lineage>
</organism>
<accession>A8AUN6</accession>
<gene>
    <name evidence="1" type="primary">argG</name>
    <name type="ordered locus">SGO_0175</name>
</gene>
<sequence>MVKEKVILAYSGGLDTSVAITWLNKDYDVIAVCMDVGEGNDLDFIHDKALKVGAIESHVIDVKDEFAEDYVLVALQGHTFYEQKYPLVSALSRPLISKKLVEIAHKTGATTIAHGCTGKGNDQVRFEVAIASLDPSLKVIAPVREWKWSREEEINYAKANGVPIPADLDSPYSVDQNLWGRANECGVLENPWNEAPEDAYDLTVAPEAAPDSPVYVNIDFEAGVPVALDGKKMKLADLILELNDLAGQHGVGRIDHVENRLVGIKSREIYECPGAVTLLAAHKEIEDLTLVRELAHFKPIIENELSNLIYNGLWFNPATEALIAYLKSTQQVVNGTAKVKLYKGSATVVARKSDNSLYDESLATYTSADTFDQDAAIGFIKLWGLPSKVHAEVQAHKDK</sequence>
<name>ASSY_STRGC</name>
<comment type="catalytic activity">
    <reaction evidence="1">
        <text>L-citrulline + L-aspartate + ATP = 2-(N(omega)-L-arginino)succinate + AMP + diphosphate + H(+)</text>
        <dbReference type="Rhea" id="RHEA:10932"/>
        <dbReference type="ChEBI" id="CHEBI:15378"/>
        <dbReference type="ChEBI" id="CHEBI:29991"/>
        <dbReference type="ChEBI" id="CHEBI:30616"/>
        <dbReference type="ChEBI" id="CHEBI:33019"/>
        <dbReference type="ChEBI" id="CHEBI:57472"/>
        <dbReference type="ChEBI" id="CHEBI:57743"/>
        <dbReference type="ChEBI" id="CHEBI:456215"/>
        <dbReference type="EC" id="6.3.4.5"/>
    </reaction>
</comment>
<comment type="pathway">
    <text evidence="1">Amino-acid biosynthesis; L-arginine biosynthesis; L-arginine from L-ornithine and carbamoyl phosphate: step 2/3.</text>
</comment>
<comment type="subunit">
    <text evidence="1">Homotetramer.</text>
</comment>
<comment type="subcellular location">
    <subcellularLocation>
        <location evidence="1">Cytoplasm</location>
    </subcellularLocation>
</comment>
<comment type="similarity">
    <text evidence="1">Belongs to the argininosuccinate synthase family. Type 1 subfamily.</text>
</comment>
<feature type="chain" id="PRO_1000073836" description="Argininosuccinate synthase">
    <location>
        <begin position="1"/>
        <end position="399"/>
    </location>
</feature>
<feature type="binding site" evidence="1">
    <location>
        <begin position="9"/>
        <end position="17"/>
    </location>
    <ligand>
        <name>ATP</name>
        <dbReference type="ChEBI" id="CHEBI:30616"/>
    </ligand>
</feature>
<feature type="binding site" evidence="1">
    <location>
        <position position="85"/>
    </location>
    <ligand>
        <name>L-citrulline</name>
        <dbReference type="ChEBI" id="CHEBI:57743"/>
    </ligand>
</feature>
<feature type="binding site" evidence="1">
    <location>
        <position position="115"/>
    </location>
    <ligand>
        <name>ATP</name>
        <dbReference type="ChEBI" id="CHEBI:30616"/>
    </ligand>
</feature>
<feature type="binding site" evidence="1">
    <location>
        <position position="117"/>
    </location>
    <ligand>
        <name>L-aspartate</name>
        <dbReference type="ChEBI" id="CHEBI:29991"/>
    </ligand>
</feature>
<feature type="binding site" evidence="1">
    <location>
        <position position="121"/>
    </location>
    <ligand>
        <name>L-aspartate</name>
        <dbReference type="ChEBI" id="CHEBI:29991"/>
    </ligand>
</feature>
<feature type="binding site" evidence="1">
    <location>
        <position position="121"/>
    </location>
    <ligand>
        <name>L-citrulline</name>
        <dbReference type="ChEBI" id="CHEBI:57743"/>
    </ligand>
</feature>
<feature type="binding site" evidence="1">
    <location>
        <position position="122"/>
    </location>
    <ligand>
        <name>L-aspartate</name>
        <dbReference type="ChEBI" id="CHEBI:29991"/>
    </ligand>
</feature>
<feature type="binding site" evidence="1">
    <location>
        <position position="125"/>
    </location>
    <ligand>
        <name>L-citrulline</name>
        <dbReference type="ChEBI" id="CHEBI:57743"/>
    </ligand>
</feature>
<feature type="binding site" evidence="1">
    <location>
        <position position="173"/>
    </location>
    <ligand>
        <name>L-citrulline</name>
        <dbReference type="ChEBI" id="CHEBI:57743"/>
    </ligand>
</feature>
<feature type="binding site" evidence="1">
    <location>
        <position position="258"/>
    </location>
    <ligand>
        <name>L-citrulline</name>
        <dbReference type="ChEBI" id="CHEBI:57743"/>
    </ligand>
</feature>
<feature type="binding site" evidence="1">
    <location>
        <position position="270"/>
    </location>
    <ligand>
        <name>L-citrulline</name>
        <dbReference type="ChEBI" id="CHEBI:57743"/>
    </ligand>
</feature>
<proteinExistence type="inferred from homology"/>
<keyword id="KW-0028">Amino-acid biosynthesis</keyword>
<keyword id="KW-0055">Arginine biosynthesis</keyword>
<keyword id="KW-0067">ATP-binding</keyword>
<keyword id="KW-0963">Cytoplasm</keyword>
<keyword id="KW-0436">Ligase</keyword>
<keyword id="KW-0547">Nucleotide-binding</keyword>
<keyword id="KW-1185">Reference proteome</keyword>
<reference key="1">
    <citation type="journal article" date="2007" name="J. Bacteriol.">
        <title>Genome-wide transcriptional changes in Streptococcus gordonii in response to competence signaling peptide.</title>
        <authorList>
            <person name="Vickerman M.M."/>
            <person name="Iobst S."/>
            <person name="Jesionowski A.M."/>
            <person name="Gill S.R."/>
        </authorList>
    </citation>
    <scope>NUCLEOTIDE SEQUENCE [LARGE SCALE GENOMIC DNA]</scope>
    <source>
        <strain>Challis / ATCC 35105 / BCRC 15272 / CH1 / DL1 / V288</strain>
    </source>
</reference>
<evidence type="ECO:0000255" key="1">
    <source>
        <dbReference type="HAMAP-Rule" id="MF_00005"/>
    </source>
</evidence>
<protein>
    <recommendedName>
        <fullName evidence="1">Argininosuccinate synthase</fullName>
        <ecNumber evidence="1">6.3.4.5</ecNumber>
    </recommendedName>
    <alternativeName>
        <fullName evidence="1">Citrulline--aspartate ligase</fullName>
    </alternativeName>
</protein>
<dbReference type="EC" id="6.3.4.5" evidence="1"/>
<dbReference type="EMBL" id="CP000725">
    <property type="protein sequence ID" value="ABV10858.1"/>
    <property type="molecule type" value="Genomic_DNA"/>
</dbReference>
<dbReference type="RefSeq" id="WP_011999716.1">
    <property type="nucleotide sequence ID" value="NC_009785.1"/>
</dbReference>
<dbReference type="SMR" id="A8AUN6"/>
<dbReference type="STRING" id="467705.SGO_0175"/>
<dbReference type="KEGG" id="sgo:SGO_0175"/>
<dbReference type="eggNOG" id="COG0137">
    <property type="taxonomic scope" value="Bacteria"/>
</dbReference>
<dbReference type="HOGENOM" id="CLU_032784_4_2_9"/>
<dbReference type="UniPathway" id="UPA00068">
    <property type="reaction ID" value="UER00113"/>
</dbReference>
<dbReference type="Proteomes" id="UP000001131">
    <property type="component" value="Chromosome"/>
</dbReference>
<dbReference type="GO" id="GO:0005737">
    <property type="term" value="C:cytoplasm"/>
    <property type="evidence" value="ECO:0007669"/>
    <property type="project" value="UniProtKB-SubCell"/>
</dbReference>
<dbReference type="GO" id="GO:0004055">
    <property type="term" value="F:argininosuccinate synthase activity"/>
    <property type="evidence" value="ECO:0007669"/>
    <property type="project" value="UniProtKB-UniRule"/>
</dbReference>
<dbReference type="GO" id="GO:0005524">
    <property type="term" value="F:ATP binding"/>
    <property type="evidence" value="ECO:0007669"/>
    <property type="project" value="UniProtKB-UniRule"/>
</dbReference>
<dbReference type="GO" id="GO:0000053">
    <property type="term" value="P:argininosuccinate metabolic process"/>
    <property type="evidence" value="ECO:0007669"/>
    <property type="project" value="TreeGrafter"/>
</dbReference>
<dbReference type="GO" id="GO:0006526">
    <property type="term" value="P:L-arginine biosynthetic process"/>
    <property type="evidence" value="ECO:0007669"/>
    <property type="project" value="UniProtKB-UniRule"/>
</dbReference>
<dbReference type="GO" id="GO:0000050">
    <property type="term" value="P:urea cycle"/>
    <property type="evidence" value="ECO:0007669"/>
    <property type="project" value="TreeGrafter"/>
</dbReference>
<dbReference type="CDD" id="cd01999">
    <property type="entry name" value="ASS"/>
    <property type="match status" value="1"/>
</dbReference>
<dbReference type="FunFam" id="1.20.5.470:FF:000002">
    <property type="entry name" value="Argininosuccinate synthase"/>
    <property type="match status" value="1"/>
</dbReference>
<dbReference type="FunFam" id="3.40.50.620:FF:000038">
    <property type="entry name" value="Argininosuccinate synthase"/>
    <property type="match status" value="1"/>
</dbReference>
<dbReference type="FunFam" id="3.90.1260.10:FF:000007">
    <property type="entry name" value="Argininosuccinate synthase"/>
    <property type="match status" value="1"/>
</dbReference>
<dbReference type="Gene3D" id="3.90.1260.10">
    <property type="entry name" value="Argininosuccinate synthetase, chain A, domain 2"/>
    <property type="match status" value="1"/>
</dbReference>
<dbReference type="Gene3D" id="3.40.50.620">
    <property type="entry name" value="HUPs"/>
    <property type="match status" value="1"/>
</dbReference>
<dbReference type="Gene3D" id="1.20.5.470">
    <property type="entry name" value="Single helix bin"/>
    <property type="match status" value="1"/>
</dbReference>
<dbReference type="HAMAP" id="MF_00005">
    <property type="entry name" value="Arg_succ_synth_type1"/>
    <property type="match status" value="1"/>
</dbReference>
<dbReference type="InterPro" id="IPR048268">
    <property type="entry name" value="Arginosuc_syn_C"/>
</dbReference>
<dbReference type="InterPro" id="IPR048267">
    <property type="entry name" value="Arginosuc_syn_N"/>
</dbReference>
<dbReference type="InterPro" id="IPR001518">
    <property type="entry name" value="Arginosuc_synth"/>
</dbReference>
<dbReference type="InterPro" id="IPR018223">
    <property type="entry name" value="Arginosuc_synth_CS"/>
</dbReference>
<dbReference type="InterPro" id="IPR023434">
    <property type="entry name" value="Arginosuc_synth_type_1_subfam"/>
</dbReference>
<dbReference type="InterPro" id="IPR024074">
    <property type="entry name" value="AS_cat/multimer_dom_body"/>
</dbReference>
<dbReference type="InterPro" id="IPR014729">
    <property type="entry name" value="Rossmann-like_a/b/a_fold"/>
</dbReference>
<dbReference type="NCBIfam" id="TIGR00032">
    <property type="entry name" value="argG"/>
    <property type="match status" value="1"/>
</dbReference>
<dbReference type="NCBIfam" id="NF001770">
    <property type="entry name" value="PRK00509.1"/>
    <property type="match status" value="1"/>
</dbReference>
<dbReference type="PANTHER" id="PTHR11587">
    <property type="entry name" value="ARGININOSUCCINATE SYNTHASE"/>
    <property type="match status" value="1"/>
</dbReference>
<dbReference type="PANTHER" id="PTHR11587:SF2">
    <property type="entry name" value="ARGININOSUCCINATE SYNTHASE"/>
    <property type="match status" value="1"/>
</dbReference>
<dbReference type="Pfam" id="PF20979">
    <property type="entry name" value="Arginosuc_syn_C"/>
    <property type="match status" value="1"/>
</dbReference>
<dbReference type="Pfam" id="PF00764">
    <property type="entry name" value="Arginosuc_synth"/>
    <property type="match status" value="1"/>
</dbReference>
<dbReference type="SUPFAM" id="SSF52402">
    <property type="entry name" value="Adenine nucleotide alpha hydrolases-like"/>
    <property type="match status" value="1"/>
</dbReference>
<dbReference type="SUPFAM" id="SSF69864">
    <property type="entry name" value="Argininosuccinate synthetase, C-terminal domain"/>
    <property type="match status" value="1"/>
</dbReference>
<dbReference type="PROSITE" id="PS00564">
    <property type="entry name" value="ARGININOSUCCIN_SYN_1"/>
    <property type="match status" value="1"/>
</dbReference>
<dbReference type="PROSITE" id="PS00565">
    <property type="entry name" value="ARGININOSUCCIN_SYN_2"/>
    <property type="match status" value="1"/>
</dbReference>